<organism>
    <name type="scientific">Arabidopsis thaliana</name>
    <name type="common">Mouse-ear cress</name>
    <dbReference type="NCBI Taxonomy" id="3702"/>
    <lineage>
        <taxon>Eukaryota</taxon>
        <taxon>Viridiplantae</taxon>
        <taxon>Streptophyta</taxon>
        <taxon>Embryophyta</taxon>
        <taxon>Tracheophyta</taxon>
        <taxon>Spermatophyta</taxon>
        <taxon>Magnoliopsida</taxon>
        <taxon>eudicotyledons</taxon>
        <taxon>Gunneridae</taxon>
        <taxon>Pentapetalae</taxon>
        <taxon>rosids</taxon>
        <taxon>malvids</taxon>
        <taxon>Brassicales</taxon>
        <taxon>Brassicaceae</taxon>
        <taxon>Camelineae</taxon>
        <taxon>Arabidopsis</taxon>
    </lineage>
</organism>
<name>FACR2_ARATH</name>
<sequence>MEALFLSSSSSSIVASNKLTRLHNHCVWSTVIRDKKRFGPTWCRVGGGGDGGRNSNAERPIRVSSLLKDRGQVLIREQSSPAMDAETLVLSPNGNGRTIEINGVKTLMPFSGASMVGMKEGLGIISFLQGKKFLITGSTGFLAKVLIEKVLRMAPDVSKIYLLIKAKSKEAAIERLKNEVLDAELFNTLKETHGASYMSFMLTKLIPVTGNICDSNIGLQADSAEEIAKEVDVIINSAANTTFNERYDVALDINTRGPGNLMGFAKKCKKLKLFLQVSTAYVNGQRQGRIMEKPFSMGDCIATENFLEGNRKALDVDREMKLALEAARKGTQNQDEAQKMKDLGLERARSYGWQDTYVFTKAMGEMMINSTRGDVPVVIIRPSVIESTYKDPFPGWMEGNRMMDPIVLCYGKGQLTGFLVDPKGVLDVVPADMVVNATLAAIAKHGMAMSDPEPEINVYQIASSAINPLVFEDLAELLYNHYKTSPCMDSKGDPIMVRLMKLFNSVDDFSDHLWRDAQERSGLMSGMSSVDSKMMQKLKFICKKSVEQAKHLATIYEPYTFYGGRFDNSNTQRLMENMSEDEKREFGFDVGSINWTDYITNVHIPGLRRHVLKGRA</sequence>
<accession>Q08891</accession>
<accession>B9TSP6</accession>
<accession>Q9LHM3</accession>
<reference key="1">
    <citation type="journal article" date="1993" name="Nature">
        <title>Transposon tagging of a male sterility gene in Arabidopsis.</title>
        <authorList>
            <person name="Aarts M.G.M."/>
            <person name="Dirkse W.G."/>
            <person name="Stiekema W.J."/>
            <person name="Pereira A."/>
        </authorList>
    </citation>
    <scope>NUCLEOTIDE SEQUENCE [MRNA]</scope>
    <scope>DISRUPTION PHENOTYPE</scope>
    <source>
        <strain>cv. Landsberg erecta</strain>
        <tissue>Flower</tissue>
    </source>
</reference>
<reference key="2">
    <citation type="journal article" date="2009" name="J. Plant Physiol.">
        <title>Functional expression of five Arabidopsis fatty acyl-CoA reductase genes in Escherichia coli.</title>
        <authorList>
            <person name="Doan T.P.T."/>
            <person name="Carlsson A.S."/>
            <person name="Hamberg M."/>
            <person name="Buelow L."/>
            <person name="Stymne S."/>
            <person name="Olsson P."/>
        </authorList>
    </citation>
    <scope>NUCLEOTIDE SEQUENCE [MRNA]</scope>
    <scope>FUNCTION</scope>
    <scope>CATALYTIC ACTIVITY</scope>
</reference>
<reference key="3">
    <citation type="journal article" date="2000" name="DNA Res.">
        <title>Structural analysis of Arabidopsis thaliana chromosome 3. II. Sequence features of the 4,251,695 bp regions covered by 90 P1, TAC and BAC clones.</title>
        <authorList>
            <person name="Kaneko T."/>
            <person name="Katoh T."/>
            <person name="Sato S."/>
            <person name="Nakamura Y."/>
            <person name="Asamizu E."/>
            <person name="Tabata S."/>
        </authorList>
    </citation>
    <scope>NUCLEOTIDE SEQUENCE [LARGE SCALE GENOMIC DNA]</scope>
    <source>
        <strain>cv. Columbia</strain>
    </source>
</reference>
<reference key="4">
    <citation type="journal article" date="2000" name="Nature">
        <title>Sequence and analysis of chromosome 3 of the plant Arabidopsis thaliana.</title>
        <authorList>
            <person name="Salanoubat M."/>
            <person name="Lemcke K."/>
            <person name="Rieger M."/>
            <person name="Ansorge W."/>
            <person name="Unseld M."/>
            <person name="Fartmann B."/>
            <person name="Valle G."/>
            <person name="Bloecker H."/>
            <person name="Perez-Alonso M."/>
            <person name="Obermaier B."/>
            <person name="Delseny M."/>
            <person name="Boutry M."/>
            <person name="Grivell L.A."/>
            <person name="Mache R."/>
            <person name="Puigdomenech P."/>
            <person name="De Simone V."/>
            <person name="Choisne N."/>
            <person name="Artiguenave F."/>
            <person name="Robert C."/>
            <person name="Brottier P."/>
            <person name="Wincker P."/>
            <person name="Cattolico L."/>
            <person name="Weissenbach J."/>
            <person name="Saurin W."/>
            <person name="Quetier F."/>
            <person name="Schaefer M."/>
            <person name="Mueller-Auer S."/>
            <person name="Gabel C."/>
            <person name="Fuchs M."/>
            <person name="Benes V."/>
            <person name="Wurmbach E."/>
            <person name="Drzonek H."/>
            <person name="Erfle H."/>
            <person name="Jordan N."/>
            <person name="Bangert S."/>
            <person name="Wiedelmann R."/>
            <person name="Kranz H."/>
            <person name="Voss H."/>
            <person name="Holland R."/>
            <person name="Brandt P."/>
            <person name="Nyakatura G."/>
            <person name="Vezzi A."/>
            <person name="D'Angelo M."/>
            <person name="Pallavicini A."/>
            <person name="Toppo S."/>
            <person name="Simionati B."/>
            <person name="Conrad A."/>
            <person name="Hornischer K."/>
            <person name="Kauer G."/>
            <person name="Loehnert T.-H."/>
            <person name="Nordsiek G."/>
            <person name="Reichelt J."/>
            <person name="Scharfe M."/>
            <person name="Schoen O."/>
            <person name="Bargues M."/>
            <person name="Terol J."/>
            <person name="Climent J."/>
            <person name="Navarro P."/>
            <person name="Collado C."/>
            <person name="Perez-Perez A."/>
            <person name="Ottenwaelder B."/>
            <person name="Duchemin D."/>
            <person name="Cooke R."/>
            <person name="Laudie M."/>
            <person name="Berger-Llauro C."/>
            <person name="Purnelle B."/>
            <person name="Masuy D."/>
            <person name="de Haan M."/>
            <person name="Maarse A.C."/>
            <person name="Alcaraz J.-P."/>
            <person name="Cottet A."/>
            <person name="Casacuberta E."/>
            <person name="Monfort A."/>
            <person name="Argiriou A."/>
            <person name="Flores M."/>
            <person name="Liguori R."/>
            <person name="Vitale D."/>
            <person name="Mannhaupt G."/>
            <person name="Haase D."/>
            <person name="Schoof H."/>
            <person name="Rudd S."/>
            <person name="Zaccaria P."/>
            <person name="Mewes H.-W."/>
            <person name="Mayer K.F.X."/>
            <person name="Kaul S."/>
            <person name="Town C.D."/>
            <person name="Koo H.L."/>
            <person name="Tallon L.J."/>
            <person name="Jenkins J."/>
            <person name="Rooney T."/>
            <person name="Rizzo M."/>
            <person name="Walts A."/>
            <person name="Utterback T."/>
            <person name="Fujii C.Y."/>
            <person name="Shea T.P."/>
            <person name="Creasy T.H."/>
            <person name="Haas B."/>
            <person name="Maiti R."/>
            <person name="Wu D."/>
            <person name="Peterson J."/>
            <person name="Van Aken S."/>
            <person name="Pai G."/>
            <person name="Militscher J."/>
            <person name="Sellers P."/>
            <person name="Gill J.E."/>
            <person name="Feldblyum T.V."/>
            <person name="Preuss D."/>
            <person name="Lin X."/>
            <person name="Nierman W.C."/>
            <person name="Salzberg S.L."/>
            <person name="White O."/>
            <person name="Venter J.C."/>
            <person name="Fraser C.M."/>
            <person name="Kaneko T."/>
            <person name="Nakamura Y."/>
            <person name="Sato S."/>
            <person name="Kato T."/>
            <person name="Asamizu E."/>
            <person name="Sasamoto S."/>
            <person name="Kimura T."/>
            <person name="Idesawa K."/>
            <person name="Kawashima K."/>
            <person name="Kishida Y."/>
            <person name="Kiyokawa C."/>
            <person name="Kohara M."/>
            <person name="Matsumoto M."/>
            <person name="Matsuno A."/>
            <person name="Muraki A."/>
            <person name="Nakayama S."/>
            <person name="Nakazaki N."/>
            <person name="Shinpo S."/>
            <person name="Takeuchi C."/>
            <person name="Wada T."/>
            <person name="Watanabe A."/>
            <person name="Yamada M."/>
            <person name="Yasuda M."/>
            <person name="Tabata S."/>
        </authorList>
    </citation>
    <scope>NUCLEOTIDE SEQUENCE [LARGE SCALE GENOMIC DNA]</scope>
    <source>
        <strain>cv. Columbia</strain>
    </source>
</reference>
<reference key="5">
    <citation type="journal article" date="2017" name="Plant J.">
        <title>Araport11: a complete reannotation of the Arabidopsis thaliana reference genome.</title>
        <authorList>
            <person name="Cheng C.Y."/>
            <person name="Krishnakumar V."/>
            <person name="Chan A.P."/>
            <person name="Thibaud-Nissen F."/>
            <person name="Schobel S."/>
            <person name="Town C.D."/>
        </authorList>
    </citation>
    <scope>GENOME REANNOTATION</scope>
    <source>
        <strain>cv. Columbia</strain>
    </source>
</reference>
<reference key="6">
    <citation type="journal article" date="1997" name="Plant J.">
        <title>The Arabidopsis MALE STERILITY 2 protein shares similarity with reductases in elongation/condensation complexes.</title>
        <authorList>
            <person name="Aarts M.G.M."/>
            <person name="Hodge R.P."/>
            <person name="Kalantidis K."/>
            <person name="Florack D."/>
            <person name="Wilson Z.A."/>
            <person name="Mulligan B.J."/>
            <person name="Stiekema W.J."/>
            <person name="Scott R."/>
            <person name="Pereira A."/>
        </authorList>
    </citation>
    <scope>FUNCTION</scope>
    <scope>DISRUPTION PHENOTYPE</scope>
    <scope>TISSUE SPECIFICITY</scope>
    <scope>DEVELOPMENTAL STAGE</scope>
</reference>
<reference key="7">
    <citation type="journal article" date="2011" name="Plant Physiol.">
        <title>Male Sterile2 encodes a plastid-localized fatty acyl carrier protein reductase required for pollen exine development in Arabidopsis.</title>
        <authorList>
            <person name="Chen W."/>
            <person name="Yu X.-H."/>
            <person name="Zhang K."/>
            <person name="Shi J."/>
            <person name="De Oliveira S."/>
            <person name="Schreiber L."/>
            <person name="Shanklin J."/>
            <person name="Zhang D."/>
        </authorList>
    </citation>
    <scope>FUNCTION</scope>
    <scope>DISRUPTION PHENOTYPE</scope>
    <scope>ACTIVE SITES</scope>
    <scope>SUBCELLULAR LOCATION</scope>
    <scope>BIOPHYSICOCHEMICAL PROPERTIES</scope>
    <scope>CATALYTIC ACTIVITY</scope>
    <source>
        <strain>cv. Columbia</strain>
    </source>
</reference>
<reference key="8">
    <citation type="journal article" date="2011" name="Plant Physiol.">
        <title>A large-scale genetic screen in Arabidopsis to identify genes involved in pollen exine production.</title>
        <authorList>
            <person name="Dobritsa A.A."/>
            <person name="Geanconteri A."/>
            <person name="Shrestha J."/>
            <person name="Carlson A."/>
            <person name="Kooyers N."/>
            <person name="Coerper D."/>
            <person name="Urbanczyk-Wochniak E."/>
            <person name="Bench B.J."/>
            <person name="Sumner L.W."/>
            <person name="Swanson R."/>
            <person name="Preuss D."/>
        </authorList>
    </citation>
    <scope>FUNCTION [LARGE SCALE ANALYSIS]</scope>
    <scope>DISRUPTION PHENOTYPE [LARGE SCALE ANALYSIS]</scope>
</reference>
<reference key="9">
    <citation type="journal article" date="2013" name="Arabidopsis Book">
        <title>Acyl-lipid metabolism.</title>
        <authorList>
            <person name="Li-Beisson Y."/>
            <person name="Shorrosh B."/>
            <person name="Beisson F."/>
            <person name="Andersson M.X."/>
            <person name="Arondel V."/>
            <person name="Bates P.D."/>
            <person name="Baud S."/>
            <person name="Bird D."/>
            <person name="Debono A."/>
            <person name="Durrett T.P."/>
            <person name="Franke R.B."/>
            <person name="Graham I.A."/>
            <person name="Katayama K."/>
            <person name="Kelly A.A."/>
            <person name="Larson T."/>
            <person name="Markham J.E."/>
            <person name="Miquel M."/>
            <person name="Molina I."/>
            <person name="Nishida I."/>
            <person name="Rowland O."/>
            <person name="Samuels L."/>
            <person name="Schmid K.M."/>
            <person name="Wada H."/>
            <person name="Welti R."/>
            <person name="Xu C."/>
            <person name="Zallot R."/>
            <person name="Ohlrogge J."/>
        </authorList>
    </citation>
    <scope>REVIEW ON ACYL-LIPID METABOLISM</scope>
</reference>
<reference key="10">
    <citation type="journal article" date="2013" name="Plant Biol.">
        <title>Pollen wall development: the associated enzymes and metabolic pathways.</title>
        <authorList>
            <person name="Jiang J."/>
            <person name="Zhang Z."/>
            <person name="Cao J."/>
        </authorList>
    </citation>
    <scope>REVIEW ON POLLEN WALL DEVELOPMENT</scope>
</reference>
<reference key="11">
    <citation type="journal article" date="2015" name="Ecotoxicology">
        <title>Trace concentrations of imazethapyr (IM) affect floral organs development and reproduction in Arabidopsis thaliana: IM-induced inhibition of key genes regulating anther and pollen biosynthesis.</title>
        <authorList>
            <person name="Qian H."/>
            <person name="Li Y."/>
            <person name="Sun C."/>
            <person name="Lavoie M."/>
            <person name="Xie J."/>
            <person name="Bai X."/>
            <person name="Fu Z."/>
        </authorList>
    </citation>
    <scope>REPRESSION BY IMAZETHAPYR</scope>
    <source>
        <strain>cv. Columbia</strain>
    </source>
</reference>
<reference key="12">
    <citation type="journal article" date="2016" name="Acta Biochim. Pol.">
        <title>Biochemical characteristics of AtFAR2, a fatty acid reductase from Arabidopsis thaliana that reduces fatty acyl-CoA and -ACP substrates into fatty alcohols.</title>
        <authorList>
            <person name="Doan T.T."/>
            <person name="Carlsson A.S."/>
            <person name="Stymne S."/>
            <person name="Hofvander P."/>
        </authorList>
    </citation>
    <scope>FUNCTION</scope>
    <scope>CATALYTIC ACTIVITY</scope>
    <scope>BIOPHYSICOCHEMICAL PROPERTIES</scope>
</reference>
<feature type="transit peptide" description="Chloroplast" evidence="2">
    <location>
        <begin position="1"/>
        <end position="14"/>
    </location>
</feature>
<feature type="chain" id="PRO_0000096582" description="Fatty acyl-CoA reductase 2, chloroplastic">
    <location>
        <begin position="15"/>
        <end position="616"/>
    </location>
</feature>
<feature type="short sequence motif" description="NAD(P)H-binding" evidence="8">
    <location>
        <begin position="133"/>
        <end position="143"/>
    </location>
</feature>
<feature type="active site" evidence="8">
    <location>
        <position position="357"/>
    </location>
</feature>
<feature type="active site" evidence="8">
    <location>
        <position position="361"/>
    </location>
</feature>
<feature type="sequence conflict" description="In Ref. 1; CAA52019." evidence="12" ref="1">
    <original>A</original>
    <variation>G</variation>
    <location>
        <position position="15"/>
    </location>
</feature>
<feature type="sequence conflict" description="In Ref. 1; CAA52019." evidence="12" ref="1">
    <original>R</original>
    <variation>S</variation>
    <location>
        <position position="59"/>
    </location>
</feature>
<feature type="sequence conflict" description="In Ref. 1; CAA52019." evidence="12" ref="1">
    <original>V</original>
    <variation>A</variation>
    <location>
        <position position="530"/>
    </location>
</feature>
<evidence type="ECO:0000269" key="1">
    <source>
    </source>
</evidence>
<evidence type="ECO:0000269" key="2">
    <source>
    </source>
</evidence>
<evidence type="ECO:0000269" key="3">
    <source>
    </source>
</evidence>
<evidence type="ECO:0000269" key="4">
    <source>
    </source>
</evidence>
<evidence type="ECO:0000269" key="5">
    <source>
    </source>
</evidence>
<evidence type="ECO:0000269" key="6">
    <source>
    </source>
</evidence>
<evidence type="ECO:0000269" key="7">
    <source>
    </source>
</evidence>
<evidence type="ECO:0000303" key="8">
    <source>
    </source>
</evidence>
<evidence type="ECO:0000303" key="9">
    <source>
    </source>
</evidence>
<evidence type="ECO:0000303" key="10">
    <source>
    </source>
</evidence>
<evidence type="ECO:0000303" key="11">
    <source>
    </source>
</evidence>
<evidence type="ECO:0000305" key="12"/>
<evidence type="ECO:0000305" key="13">
    <source>
    </source>
</evidence>
<evidence type="ECO:0000312" key="14">
    <source>
        <dbReference type="Araport" id="AT3G11980"/>
    </source>
</evidence>
<evidence type="ECO:0000312" key="15">
    <source>
        <dbReference type="EMBL" id="AAG51054.1"/>
    </source>
</evidence>
<evidence type="ECO:0000312" key="16">
    <source>
        <dbReference type="EMBL" id="BAB03110.1"/>
    </source>
</evidence>
<proteinExistence type="evidence at protein level"/>
<keyword id="KW-0150">Chloroplast</keyword>
<keyword id="KW-0444">Lipid biosynthesis</keyword>
<keyword id="KW-0443">Lipid metabolism</keyword>
<keyword id="KW-0521">NADP</keyword>
<keyword id="KW-0560">Oxidoreductase</keyword>
<keyword id="KW-0934">Plastid</keyword>
<keyword id="KW-1185">Reference proteome</keyword>
<keyword id="KW-0809">Transit peptide</keyword>
<gene>
    <name evidence="10" type="primary">FAR2</name>
    <name evidence="11" type="synonym">MS2</name>
    <name evidence="14" type="ordered locus">At3g11980</name>
    <name evidence="16" type="ORF">MEC18.11</name>
    <name evidence="15" type="ORF">T21B14.18</name>
    <name type="ORF">T21B14_123</name>
</gene>
<comment type="function">
    <text evidence="1 2 3 5 7">Catalyzes the reduction of fatty acyl-CoA and -ACP (acyl carrier protein) substrates to fatty alcohols (PubMed:19062129, PubMed:27274541). Triggers the accumulation of C16 and C18 fatty alcohols; converts palmitoyl-acyl carrier protein to the corresponding C16:0 alcohol with NAD(P)H as electron donor, but seems inactive toward palmitoyl- or other acyl-coenzyme A (PubMed:21813653). Also triggers the formation of some C16:0 aldehydes (PubMed:27274541). Involved in the synthesis of the lipid component in sporopollenin (PubMed:19062129). Required for exine patterning of pollen grain by mediating the formation of pollen wall substances (PubMed:21813653, PubMed:21849515, PubMed:9351246).</text>
</comment>
<comment type="catalytic activity">
    <reaction evidence="1">
        <text>a long-chain fatty acyl-CoA + 2 NADPH + 2 H(+) = a long-chain primary fatty alcohol + 2 NADP(+) + CoA</text>
        <dbReference type="Rhea" id="RHEA:52716"/>
        <dbReference type="ChEBI" id="CHEBI:15378"/>
        <dbReference type="ChEBI" id="CHEBI:57287"/>
        <dbReference type="ChEBI" id="CHEBI:57783"/>
        <dbReference type="ChEBI" id="CHEBI:58349"/>
        <dbReference type="ChEBI" id="CHEBI:77396"/>
        <dbReference type="ChEBI" id="CHEBI:83139"/>
        <dbReference type="EC" id="1.2.1.84"/>
    </reaction>
</comment>
<comment type="catalytic activity">
    <reaction evidence="5">
        <text>hexadecanoyl-CoA + 2 NADPH + 2 H(+) = hexadecan-1-ol + 2 NADP(+) + CoA</text>
        <dbReference type="Rhea" id="RHEA:36315"/>
        <dbReference type="ChEBI" id="CHEBI:15378"/>
        <dbReference type="ChEBI" id="CHEBI:16125"/>
        <dbReference type="ChEBI" id="CHEBI:57287"/>
        <dbReference type="ChEBI" id="CHEBI:57379"/>
        <dbReference type="ChEBI" id="CHEBI:57783"/>
        <dbReference type="ChEBI" id="CHEBI:58349"/>
        <dbReference type="EC" id="1.2.1.84"/>
    </reaction>
    <physiologicalReaction direction="left-to-right" evidence="5">
        <dbReference type="Rhea" id="RHEA:36316"/>
    </physiologicalReaction>
</comment>
<comment type="catalytic activity">
    <reaction evidence="2 5">
        <text>hexadecanoyl-[ACP] + 2 NADPH + 2 H(+) = hexadecan-1-ol + holo-[ACP] + 2 NADP(+)</text>
        <dbReference type="Rhea" id="RHEA:54328"/>
        <dbReference type="Rhea" id="RHEA-COMP:9652"/>
        <dbReference type="Rhea" id="RHEA-COMP:9685"/>
        <dbReference type="ChEBI" id="CHEBI:15378"/>
        <dbReference type="ChEBI" id="CHEBI:16125"/>
        <dbReference type="ChEBI" id="CHEBI:57783"/>
        <dbReference type="ChEBI" id="CHEBI:58349"/>
        <dbReference type="ChEBI" id="CHEBI:64479"/>
        <dbReference type="ChEBI" id="CHEBI:78483"/>
    </reaction>
    <physiologicalReaction direction="left-to-right" evidence="2 5">
        <dbReference type="Rhea" id="RHEA:54329"/>
    </physiologicalReaction>
</comment>
<comment type="biophysicochemical properties">
    <kinetics>
        <KM evidence="2">23.3 uM for hexadecanoyl-[ACP] (at pH 6 and 30 degrees Celsius)</KM>
        <KM evidence="5">5.31 uM for hexadecanoyl-CoA (at pH 7 and 30 degrees Celsius)</KM>
        <Vmax evidence="2">38.3 nmol/min/mg enzyme with hexadecanoyl-[ACP] as substrate (at pH 6 and 30 degrees Celsius)</Vmax>
        <Vmax evidence="5">6.72 nmol/min/mg enzyme with hexadecanoyl-CoA as substrate (at pH 7 and 30 degrees Celsius)</Vmax>
    </kinetics>
    <phDependence>
        <text evidence="2 5">Optimum pH is 6.</text>
    </phDependence>
    <temperatureDependence>
        <text evidence="2">Optimum temperature is 30 degrees Celsius.</text>
    </temperatureDependence>
</comment>
<comment type="subcellular location">
    <subcellularLocation>
        <location evidence="2">Plastid</location>
        <location evidence="2">Chloroplast</location>
    </subcellularLocation>
</comment>
<comment type="tissue specificity">
    <text evidence="7">Expressed in the tapetum of anthers.</text>
</comment>
<comment type="developmental stage">
    <text evidence="7">Expressed during microsporogenesis when microspores are released from tetrads.</text>
</comment>
<comment type="induction">
    <text evidence="4">Repressed by imazethapyr (IM), a herbicide of the imidazolines family.</text>
</comment>
<comment type="disruption phenotype">
    <text evidence="2 3 6 7">Male sterility (PubMed:8390620, PubMed:9351246). Very thin pollen wall with abnormal exine patterning (PubMed:21813653, PubMed:21849515, PubMed:9351246).</text>
</comment>
<comment type="similarity">
    <text evidence="12">Belongs to the fatty acyl-CoA reductase family.</text>
</comment>
<dbReference type="EC" id="1.2.1.84" evidence="1 2 5"/>
<dbReference type="EMBL" id="X73652">
    <property type="protein sequence ID" value="CAA52019.1"/>
    <property type="molecule type" value="mRNA"/>
</dbReference>
<dbReference type="EMBL" id="EU280150">
    <property type="protein sequence ID" value="ABZ10952.1"/>
    <property type="molecule type" value="mRNA"/>
</dbReference>
<dbReference type="EMBL" id="AP002040">
    <property type="protein sequence ID" value="BAB03110.1"/>
    <property type="molecule type" value="Genomic_DNA"/>
</dbReference>
<dbReference type="EMBL" id="AC069473">
    <property type="protein sequence ID" value="AAG51054.1"/>
    <property type="molecule type" value="Genomic_DNA"/>
</dbReference>
<dbReference type="EMBL" id="CP002686">
    <property type="protein sequence ID" value="AEE75132.1"/>
    <property type="molecule type" value="Genomic_DNA"/>
</dbReference>
<dbReference type="PIR" id="S33804">
    <property type="entry name" value="S33804"/>
</dbReference>
<dbReference type="RefSeq" id="NP_187805.1">
    <property type="nucleotide sequence ID" value="NM_112032.3"/>
</dbReference>
<dbReference type="SMR" id="Q08891"/>
<dbReference type="FunCoup" id="Q08891">
    <property type="interactions" value="420"/>
</dbReference>
<dbReference type="STRING" id="3702.Q08891"/>
<dbReference type="SwissLipids" id="SLP:000001749"/>
<dbReference type="PaxDb" id="3702-AT3G11980.1"/>
<dbReference type="EnsemblPlants" id="AT3G11980.1">
    <property type="protein sequence ID" value="AT3G11980.1"/>
    <property type="gene ID" value="AT3G11980"/>
</dbReference>
<dbReference type="GeneID" id="820372"/>
<dbReference type="Gramene" id="AT3G11980.1">
    <property type="protein sequence ID" value="AT3G11980.1"/>
    <property type="gene ID" value="AT3G11980"/>
</dbReference>
<dbReference type="KEGG" id="ath:AT3G11980"/>
<dbReference type="Araport" id="AT3G11980"/>
<dbReference type="TAIR" id="AT3G11980">
    <property type="gene designation" value="MS2"/>
</dbReference>
<dbReference type="eggNOG" id="KOG1221">
    <property type="taxonomic scope" value="Eukaryota"/>
</dbReference>
<dbReference type="HOGENOM" id="CLU_024661_4_1_1"/>
<dbReference type="InParanoid" id="Q08891"/>
<dbReference type="OMA" id="WRDAQER"/>
<dbReference type="OrthoDB" id="429813at2759"/>
<dbReference type="PhylomeDB" id="Q08891"/>
<dbReference type="BioCyc" id="ARA:AT3G11980-MONOMER"/>
<dbReference type="BioCyc" id="MetaCyc:AT3G11980-MONOMER"/>
<dbReference type="BRENDA" id="1.2.1.42">
    <property type="organism ID" value="399"/>
</dbReference>
<dbReference type="BRENDA" id="1.2.1.50">
    <property type="organism ID" value="399"/>
</dbReference>
<dbReference type="PRO" id="PR:Q08891"/>
<dbReference type="Proteomes" id="UP000006548">
    <property type="component" value="Chromosome 3"/>
</dbReference>
<dbReference type="ExpressionAtlas" id="Q08891">
    <property type="expression patterns" value="baseline and differential"/>
</dbReference>
<dbReference type="GO" id="GO:0009507">
    <property type="term" value="C:chloroplast"/>
    <property type="evidence" value="ECO:0000314"/>
    <property type="project" value="UniProtKB"/>
</dbReference>
<dbReference type="GO" id="GO:0102965">
    <property type="term" value="F:alcohol-forming long-chain fatty acyl-CoA reductase activity"/>
    <property type="evidence" value="ECO:0007669"/>
    <property type="project" value="UniProtKB-EC"/>
</dbReference>
<dbReference type="GO" id="GO:0080019">
    <property type="term" value="F:alcohol-forming very long-chain fatty acyl-CoA reductase activity"/>
    <property type="evidence" value="ECO:0000314"/>
    <property type="project" value="UniProtKB"/>
</dbReference>
<dbReference type="GO" id="GO:0016628">
    <property type="term" value="F:oxidoreductase activity, acting on the CH-CH group of donors, NAD or NADP as acceptor"/>
    <property type="evidence" value="ECO:0000250"/>
    <property type="project" value="TAIR"/>
</dbReference>
<dbReference type="GO" id="GO:1903175">
    <property type="term" value="P:fatty alcohol biosynthetic process"/>
    <property type="evidence" value="ECO:0000314"/>
    <property type="project" value="UniProtKB"/>
</dbReference>
<dbReference type="GO" id="GO:0009556">
    <property type="term" value="P:microsporogenesis"/>
    <property type="evidence" value="ECO:0000315"/>
    <property type="project" value="TAIR"/>
</dbReference>
<dbReference type="GO" id="GO:0010584">
    <property type="term" value="P:pollen exine formation"/>
    <property type="evidence" value="ECO:0000315"/>
    <property type="project" value="UniProtKB"/>
</dbReference>
<dbReference type="GO" id="GO:0009635">
    <property type="term" value="P:response to herbicide"/>
    <property type="evidence" value="ECO:0000270"/>
    <property type="project" value="UniProtKB"/>
</dbReference>
<dbReference type="CDD" id="cd05236">
    <property type="entry name" value="FAR-N_SDR_e"/>
    <property type="match status" value="1"/>
</dbReference>
<dbReference type="CDD" id="cd09071">
    <property type="entry name" value="FAR_C"/>
    <property type="match status" value="1"/>
</dbReference>
<dbReference type="Gene3D" id="3.40.50.720">
    <property type="entry name" value="NAD(P)-binding Rossmann-like Domain"/>
    <property type="match status" value="1"/>
</dbReference>
<dbReference type="InterPro" id="IPR026055">
    <property type="entry name" value="FAR"/>
</dbReference>
<dbReference type="InterPro" id="IPR033640">
    <property type="entry name" value="FAR_C"/>
</dbReference>
<dbReference type="InterPro" id="IPR013120">
    <property type="entry name" value="Far_NAD-bd"/>
</dbReference>
<dbReference type="InterPro" id="IPR036291">
    <property type="entry name" value="NAD(P)-bd_dom_sf"/>
</dbReference>
<dbReference type="PANTHER" id="PTHR11011:SF45">
    <property type="entry name" value="FATTY ACYL-COA REDUCTASE CG8306-RELATED"/>
    <property type="match status" value="1"/>
</dbReference>
<dbReference type="PANTHER" id="PTHR11011">
    <property type="entry name" value="MALE STERILITY PROTEIN 2-RELATED"/>
    <property type="match status" value="1"/>
</dbReference>
<dbReference type="Pfam" id="PF07993">
    <property type="entry name" value="NAD_binding_4"/>
    <property type="match status" value="1"/>
</dbReference>
<dbReference type="Pfam" id="PF03015">
    <property type="entry name" value="Sterile"/>
    <property type="match status" value="1"/>
</dbReference>
<dbReference type="SUPFAM" id="SSF51735">
    <property type="entry name" value="NAD(P)-binding Rossmann-fold domains"/>
    <property type="match status" value="1"/>
</dbReference>
<protein>
    <recommendedName>
        <fullName evidence="13">Fatty acyl-CoA reductase 2, chloroplastic</fullName>
        <shortName evidence="9">AtFAR2</shortName>
        <ecNumber evidence="1 2 5">1.2.1.84</ecNumber>
    </recommendedName>
    <alternativeName>
        <fullName evidence="10">Fatty acid reductase 2</fullName>
    </alternativeName>
    <alternativeName>
        <fullName evidence="11">Male sterility protein 2</fullName>
    </alternativeName>
</protein>